<keyword id="KW-0217">Developmental protein</keyword>
<keyword id="KW-0479">Metal-binding</keyword>
<keyword id="KW-1185">Reference proteome</keyword>
<keyword id="KW-0808">Transferase</keyword>
<keyword id="KW-0833">Ubl conjugation pathway</keyword>
<keyword id="KW-0862">Zinc</keyword>
<keyword id="KW-0863">Zinc-finger</keyword>
<feature type="chain" id="PRO_0000444877" description="E3 ubiquitin-protein ligase DA2">
    <location>
        <begin position="1"/>
        <end position="401"/>
    </location>
</feature>
<feature type="zinc finger region" description="RING-type; degenerate" evidence="1">
    <location>
        <begin position="59"/>
        <end position="102"/>
    </location>
</feature>
<feature type="region of interest" description="Disordered" evidence="2">
    <location>
        <begin position="139"/>
        <end position="164"/>
    </location>
</feature>
<feature type="compositionally biased region" description="Basic and acidic residues" evidence="2">
    <location>
        <begin position="139"/>
        <end position="153"/>
    </location>
</feature>
<feature type="mutagenesis site" description="Abolishes E3 ubiquitin-protein ligase activity." evidence="3">
    <original>C</original>
    <variation>S</variation>
    <location>
        <position position="59"/>
    </location>
</feature>
<feature type="mutagenesis site" description="No effect on E3 ubiquitin-protein ligase activity." evidence="3">
    <original>N</original>
    <variation>L</variation>
    <location>
        <position position="91"/>
    </location>
</feature>
<organism>
    <name type="scientific">Arabidopsis thaliana</name>
    <name type="common">Mouse-ear cress</name>
    <dbReference type="NCBI Taxonomy" id="3702"/>
    <lineage>
        <taxon>Eukaryota</taxon>
        <taxon>Viridiplantae</taxon>
        <taxon>Streptophyta</taxon>
        <taxon>Embryophyta</taxon>
        <taxon>Tracheophyta</taxon>
        <taxon>Spermatophyta</taxon>
        <taxon>Magnoliopsida</taxon>
        <taxon>eudicotyledons</taxon>
        <taxon>Gunneridae</taxon>
        <taxon>Pentapetalae</taxon>
        <taxon>rosids</taxon>
        <taxon>malvids</taxon>
        <taxon>Brassicales</taxon>
        <taxon>Brassicaceae</taxon>
        <taxon>Camelineae</taxon>
        <taxon>Arabidopsis</taxon>
    </lineage>
</organism>
<proteinExistence type="evidence at protein level"/>
<reference key="1">
    <citation type="journal article" date="2000" name="Nature">
        <title>Sequence and analysis of chromosome 1 of the plant Arabidopsis thaliana.</title>
        <authorList>
            <person name="Theologis A."/>
            <person name="Ecker J.R."/>
            <person name="Palm C.J."/>
            <person name="Federspiel N.A."/>
            <person name="Kaul S."/>
            <person name="White O."/>
            <person name="Alonso J."/>
            <person name="Altafi H."/>
            <person name="Araujo R."/>
            <person name="Bowman C.L."/>
            <person name="Brooks S.Y."/>
            <person name="Buehler E."/>
            <person name="Chan A."/>
            <person name="Chao Q."/>
            <person name="Chen H."/>
            <person name="Cheuk R.F."/>
            <person name="Chin C.W."/>
            <person name="Chung M.K."/>
            <person name="Conn L."/>
            <person name="Conway A.B."/>
            <person name="Conway A.R."/>
            <person name="Creasy T.H."/>
            <person name="Dewar K."/>
            <person name="Dunn P."/>
            <person name="Etgu P."/>
            <person name="Feldblyum T.V."/>
            <person name="Feng J.-D."/>
            <person name="Fong B."/>
            <person name="Fujii C.Y."/>
            <person name="Gill J.E."/>
            <person name="Goldsmith A.D."/>
            <person name="Haas B."/>
            <person name="Hansen N.F."/>
            <person name="Hughes B."/>
            <person name="Huizar L."/>
            <person name="Hunter J.L."/>
            <person name="Jenkins J."/>
            <person name="Johnson-Hopson C."/>
            <person name="Khan S."/>
            <person name="Khaykin E."/>
            <person name="Kim C.J."/>
            <person name="Koo H.L."/>
            <person name="Kremenetskaia I."/>
            <person name="Kurtz D.B."/>
            <person name="Kwan A."/>
            <person name="Lam B."/>
            <person name="Langin-Hooper S."/>
            <person name="Lee A."/>
            <person name="Lee J.M."/>
            <person name="Lenz C.A."/>
            <person name="Li J.H."/>
            <person name="Li Y.-P."/>
            <person name="Lin X."/>
            <person name="Liu S.X."/>
            <person name="Liu Z.A."/>
            <person name="Luros J.S."/>
            <person name="Maiti R."/>
            <person name="Marziali A."/>
            <person name="Militscher J."/>
            <person name="Miranda M."/>
            <person name="Nguyen M."/>
            <person name="Nierman W.C."/>
            <person name="Osborne B.I."/>
            <person name="Pai G."/>
            <person name="Peterson J."/>
            <person name="Pham P.K."/>
            <person name="Rizzo M."/>
            <person name="Rooney T."/>
            <person name="Rowley D."/>
            <person name="Sakano H."/>
            <person name="Salzberg S.L."/>
            <person name="Schwartz J.R."/>
            <person name="Shinn P."/>
            <person name="Southwick A.M."/>
            <person name="Sun H."/>
            <person name="Tallon L.J."/>
            <person name="Tambunga G."/>
            <person name="Toriumi M.J."/>
            <person name="Town C.D."/>
            <person name="Utterback T."/>
            <person name="Van Aken S."/>
            <person name="Vaysberg M."/>
            <person name="Vysotskaia V.S."/>
            <person name="Walker M."/>
            <person name="Wu D."/>
            <person name="Yu G."/>
            <person name="Fraser C.M."/>
            <person name="Venter J.C."/>
            <person name="Davis R.W."/>
        </authorList>
    </citation>
    <scope>NUCLEOTIDE SEQUENCE [LARGE SCALE GENOMIC DNA]</scope>
    <source>
        <strain>cv. Columbia</strain>
    </source>
</reference>
<reference key="2">
    <citation type="journal article" date="2017" name="Plant J.">
        <title>Araport11: a complete reannotation of the Arabidopsis thaliana reference genome.</title>
        <authorList>
            <person name="Cheng C.Y."/>
            <person name="Krishnakumar V."/>
            <person name="Chan A.P."/>
            <person name="Thibaud-Nissen F."/>
            <person name="Schobel S."/>
            <person name="Town C.D."/>
        </authorList>
    </citation>
    <scope>GENOME REANNOTATION</scope>
    <source>
        <strain>cv. Columbia</strain>
    </source>
</reference>
<reference key="3">
    <citation type="journal article" date="2003" name="Science">
        <title>Empirical analysis of transcriptional activity in the Arabidopsis genome.</title>
        <authorList>
            <person name="Yamada K."/>
            <person name="Lim J."/>
            <person name="Dale J.M."/>
            <person name="Chen H."/>
            <person name="Shinn P."/>
            <person name="Palm C.J."/>
            <person name="Southwick A.M."/>
            <person name="Wu H.C."/>
            <person name="Kim C.J."/>
            <person name="Nguyen M."/>
            <person name="Pham P.K."/>
            <person name="Cheuk R.F."/>
            <person name="Karlin-Newmann G."/>
            <person name="Liu S.X."/>
            <person name="Lam B."/>
            <person name="Sakano H."/>
            <person name="Wu T."/>
            <person name="Yu G."/>
            <person name="Miranda M."/>
            <person name="Quach H.L."/>
            <person name="Tripp M."/>
            <person name="Chang C.H."/>
            <person name="Lee J.M."/>
            <person name="Toriumi M.J."/>
            <person name="Chan M.M."/>
            <person name="Tang C.C."/>
            <person name="Onodera C.S."/>
            <person name="Deng J.M."/>
            <person name="Akiyama K."/>
            <person name="Ansari Y."/>
            <person name="Arakawa T."/>
            <person name="Banh J."/>
            <person name="Banno F."/>
            <person name="Bowser L."/>
            <person name="Brooks S.Y."/>
            <person name="Carninci P."/>
            <person name="Chao Q."/>
            <person name="Choy N."/>
            <person name="Enju A."/>
            <person name="Goldsmith A.D."/>
            <person name="Gurjal M."/>
            <person name="Hansen N.F."/>
            <person name="Hayashizaki Y."/>
            <person name="Johnson-Hopson C."/>
            <person name="Hsuan V.W."/>
            <person name="Iida K."/>
            <person name="Karnes M."/>
            <person name="Khan S."/>
            <person name="Koesema E."/>
            <person name="Ishida J."/>
            <person name="Jiang P.X."/>
            <person name="Jones T."/>
            <person name="Kawai J."/>
            <person name="Kamiya A."/>
            <person name="Meyers C."/>
            <person name="Nakajima M."/>
            <person name="Narusaka M."/>
            <person name="Seki M."/>
            <person name="Sakurai T."/>
            <person name="Satou M."/>
            <person name="Tamse R."/>
            <person name="Vaysberg M."/>
            <person name="Wallender E.K."/>
            <person name="Wong C."/>
            <person name="Yamamura Y."/>
            <person name="Yuan S."/>
            <person name="Shinozaki K."/>
            <person name="Davis R.W."/>
            <person name="Theologis A."/>
            <person name="Ecker J.R."/>
        </authorList>
    </citation>
    <scope>NUCLEOTIDE SEQUENCE [LARGE SCALE MRNA]</scope>
    <source>
        <strain>cv. Columbia</strain>
    </source>
</reference>
<reference key="4">
    <citation type="journal article" date="2013" name="Plant Cell">
        <title>The ubiquitin receptor DA1 interacts with the E3 ubiquitin ligase DA2 to regulate seed and organ size in Arabidopsis.</title>
        <authorList>
            <person name="Xia T."/>
            <person name="Li N."/>
            <person name="Dumenil J."/>
            <person name="Li J."/>
            <person name="Kamenski A."/>
            <person name="Bevan M.W."/>
            <person name="Gao F."/>
            <person name="Li Y."/>
        </authorList>
    </citation>
    <scope>FUNCTION</scope>
    <scope>INTERACTION WITH DA1</scope>
    <scope>DEVELOPMENTAL STAGE</scope>
    <scope>MUTAGENESIS OF CYS-59 AND ASN-91</scope>
    <scope>DISRUPTION PHENOTYPE</scope>
</reference>
<reference key="5">
    <citation type="journal article" date="2017" name="Genes Dev.">
        <title>Ubiquitylation activates a peptidase that promotes cleavage and destabilization of its activating E3 ligases and diverse growth regulatory proteins to limit cell proliferation in Arabidopsis.</title>
        <authorList>
            <person name="Dong H."/>
            <person name="Dumenil J."/>
            <person name="Lu F.H."/>
            <person name="Na L."/>
            <person name="Vanhaeren H."/>
            <person name="Naumann C."/>
            <person name="Klecker M."/>
            <person name="Prior R."/>
            <person name="Smith C."/>
            <person name="McKenzie N."/>
            <person name="Saalbach G."/>
            <person name="Chen L."/>
            <person name="Xia T."/>
            <person name="Gonzalez N."/>
            <person name="Seguela M."/>
            <person name="Inze D."/>
            <person name="Dissmeyer N."/>
            <person name="Li Y."/>
            <person name="Bevan M.W."/>
        </authorList>
    </citation>
    <scope>FUNCTION</scope>
</reference>
<dbReference type="EC" id="2.3.2.27" evidence="3"/>
<dbReference type="EMBL" id="AC013430">
    <property type="protein sequence ID" value="AAF71811.1"/>
    <property type="status" value="ALT_SEQ"/>
    <property type="molecule type" value="Genomic_DNA"/>
</dbReference>
<dbReference type="EMBL" id="CP002684">
    <property type="protein sequence ID" value="AEE36103.1"/>
    <property type="molecule type" value="Genomic_DNA"/>
</dbReference>
<dbReference type="EMBL" id="CP002684">
    <property type="protein sequence ID" value="AEE36104.1"/>
    <property type="molecule type" value="Genomic_DNA"/>
</dbReference>
<dbReference type="EMBL" id="AY059751">
    <property type="protein sequence ID" value="AAL24099.1"/>
    <property type="molecule type" value="mRNA"/>
</dbReference>
<dbReference type="EMBL" id="AY091398">
    <property type="protein sequence ID" value="AAM14337.1"/>
    <property type="molecule type" value="mRNA"/>
</dbReference>
<dbReference type="RefSeq" id="NP_001185425.1">
    <property type="nucleotide sequence ID" value="NM_001198496.1"/>
</dbReference>
<dbReference type="RefSeq" id="NP_565180.1">
    <property type="nucleotide sequence ID" value="NM_106489.3"/>
</dbReference>
<dbReference type="FunCoup" id="Q93YV5">
    <property type="interactions" value="1563"/>
</dbReference>
<dbReference type="STRING" id="3702.Q93YV5"/>
<dbReference type="GlyGen" id="Q93YV5">
    <property type="glycosylation" value="1 site"/>
</dbReference>
<dbReference type="iPTMnet" id="Q93YV5"/>
<dbReference type="PaxDb" id="3702-AT1G78420.2"/>
<dbReference type="ProteomicsDB" id="224705"/>
<dbReference type="EnsemblPlants" id="AT1G78420.1">
    <property type="protein sequence ID" value="AT1G78420.1"/>
    <property type="gene ID" value="AT1G78420"/>
</dbReference>
<dbReference type="EnsemblPlants" id="AT1G78420.2">
    <property type="protein sequence ID" value="AT1G78420.2"/>
    <property type="gene ID" value="AT1G78420"/>
</dbReference>
<dbReference type="GeneID" id="844178"/>
<dbReference type="Gramene" id="AT1G78420.1">
    <property type="protein sequence ID" value="AT1G78420.1"/>
    <property type="gene ID" value="AT1G78420"/>
</dbReference>
<dbReference type="Gramene" id="AT1G78420.2">
    <property type="protein sequence ID" value="AT1G78420.2"/>
    <property type="gene ID" value="AT1G78420"/>
</dbReference>
<dbReference type="KEGG" id="ath:AT1G78420"/>
<dbReference type="Araport" id="AT1G78420"/>
<dbReference type="TAIR" id="AT1G78420">
    <property type="gene designation" value="DA2"/>
</dbReference>
<dbReference type="eggNOG" id="KOG2789">
    <property type="taxonomic scope" value="Eukaryota"/>
</dbReference>
<dbReference type="HOGENOM" id="CLU_032010_0_0_1"/>
<dbReference type="InParanoid" id="Q93YV5"/>
<dbReference type="OMA" id="SESFHNF"/>
<dbReference type="PhylomeDB" id="Q93YV5"/>
<dbReference type="UniPathway" id="UPA00143"/>
<dbReference type="PRO" id="PR:Q93YV5"/>
<dbReference type="Proteomes" id="UP000006548">
    <property type="component" value="Chromosome 1"/>
</dbReference>
<dbReference type="ExpressionAtlas" id="Q93YV5">
    <property type="expression patterns" value="baseline and differential"/>
</dbReference>
<dbReference type="GO" id="GO:0061630">
    <property type="term" value="F:ubiquitin protein ligase activity"/>
    <property type="evidence" value="ECO:0000314"/>
    <property type="project" value="UniProtKB"/>
</dbReference>
<dbReference type="GO" id="GO:0008270">
    <property type="term" value="F:zinc ion binding"/>
    <property type="evidence" value="ECO:0007669"/>
    <property type="project" value="UniProtKB-KW"/>
</dbReference>
<dbReference type="GO" id="GO:0016567">
    <property type="term" value="P:protein ubiquitination"/>
    <property type="evidence" value="ECO:0000314"/>
    <property type="project" value="UniProtKB"/>
</dbReference>
<dbReference type="GO" id="GO:0046620">
    <property type="term" value="P:regulation of organ growth"/>
    <property type="evidence" value="ECO:0000315"/>
    <property type="project" value="UniProtKB"/>
</dbReference>
<dbReference type="GO" id="GO:0080113">
    <property type="term" value="P:regulation of seed growth"/>
    <property type="evidence" value="ECO:0000315"/>
    <property type="project" value="UniProtKB"/>
</dbReference>
<dbReference type="InterPro" id="IPR039301">
    <property type="entry name" value="Sip5/DA2"/>
</dbReference>
<dbReference type="InterPro" id="IPR001841">
    <property type="entry name" value="Znf_RING"/>
</dbReference>
<dbReference type="PANTHER" id="PTHR31315:SF15">
    <property type="entry name" value="E3 UBIQUITIN-PROTEIN LIGASE DA2"/>
    <property type="match status" value="1"/>
</dbReference>
<dbReference type="PANTHER" id="PTHR31315">
    <property type="entry name" value="PROTEIN SIP5"/>
    <property type="match status" value="1"/>
</dbReference>
<dbReference type="PROSITE" id="PS50089">
    <property type="entry name" value="ZF_RING_2"/>
    <property type="match status" value="1"/>
</dbReference>
<comment type="function">
    <text evidence="3 4">E3 ubiquitin-protein ligase involved in the regulation of organ and seed size. Acts synergistically with DA1 to regulate seed size. Functions synergistically with DA1 to restrict cell proliferation in the maternal integuments of ovules and developing seeds. Seems to function independently of BB. Possesses E3 ubiquitin-protein ligase activity in vitro (PubMed:24045020). Polyubiquitinates DA1, DAR1 and DAR2, but not DAR3 (PubMed:28167503).</text>
</comment>
<comment type="catalytic activity">
    <reaction evidence="3">
        <text>S-ubiquitinyl-[E2 ubiquitin-conjugating enzyme]-L-cysteine + [acceptor protein]-L-lysine = [E2 ubiquitin-conjugating enzyme]-L-cysteine + N(6)-ubiquitinyl-[acceptor protein]-L-lysine.</text>
        <dbReference type="EC" id="2.3.2.27"/>
    </reaction>
</comment>
<comment type="pathway">
    <text evidence="6">Protein modification; protein ubiquitination.</text>
</comment>
<comment type="subunit">
    <text evidence="3">Interacts with DA1 (via C-terminus).</text>
</comment>
<comment type="developmental stage">
    <text evidence="3">Highly expressed during early stages of petal, stamen, carpel and ovule development, and expression decreases at the later stages of organ development.</text>
</comment>
<comment type="disruption phenotype">
    <text evidence="3">Increased organ size, biomass, and seed size and weight.</text>
</comment>
<comment type="miscellaneous">
    <text evidence="3 5">'Da' means 'large' in Chinese (PubMed:24045020). Plants overexpressing DA2 exhibit reduced organ size, biomass, and seed size and weight (PubMed:24045020).</text>
</comment>
<comment type="sequence caution" evidence="6">
    <conflict type="erroneous gene model prediction">
        <sequence resource="EMBL-CDS" id="AAF71811"/>
    </conflict>
</comment>
<name>DA2_ARATH</name>
<gene>
    <name evidence="5" type="primary">DA2</name>
    <name evidence="7" type="ordered locus">At1g78420</name>
    <name evidence="8" type="ORF">F3F9.7</name>
</gene>
<accession>Q93YV5</accession>
<accession>Q9M9F8</accession>
<sequence>MGNKLGRKRQVVEERYTKPQGLYVNKDVDVKKLRKLIVESKLAPCYPGDDESCHDLEECPICFLYYPSLNRSRCCMKSICTECFLQMKNPNSARPTQCPFCKTPNYAVEYRGVKSKEEKGIEQVEEQRVIEAKIRMRQKEMQDDEEKMQKRLESCSSSTSAMTGEMEYGSTSAISYNSLMDDGEIAPSQNASVVRQHSRPRGNREDEVDVDLEELMVMEAIWLSVQETGTQRNSASGEITSSRQYVTDNHSYVSSPPRVTPIVEPATPSSSSGGLSCAISALAERQMVGESSSHNHNHNVNVSSYSMLPGNCDSYYDIEQEVDGIDNHHHHRHHYEMGETGSSNSYVSSYMTGEGFHNFPPPPPLVIVPESFEEQMMMAMAVSMAEVHATTTCAPTEVTWQ</sequence>
<protein>
    <recommendedName>
        <fullName evidence="6">E3 ubiquitin-protein ligase DA2</fullName>
        <ecNumber evidence="3">2.3.2.27</ecNumber>
    </recommendedName>
    <alternativeName>
        <fullName evidence="6">RING-type E3 ubiquitin transferase DA2</fullName>
    </alternativeName>
</protein>
<evidence type="ECO:0000255" key="1">
    <source>
        <dbReference type="PROSITE-ProRule" id="PRU00175"/>
    </source>
</evidence>
<evidence type="ECO:0000256" key="2">
    <source>
        <dbReference type="SAM" id="MobiDB-lite"/>
    </source>
</evidence>
<evidence type="ECO:0000269" key="3">
    <source>
    </source>
</evidence>
<evidence type="ECO:0000269" key="4">
    <source>
    </source>
</evidence>
<evidence type="ECO:0000303" key="5">
    <source>
    </source>
</evidence>
<evidence type="ECO:0000305" key="6"/>
<evidence type="ECO:0000312" key="7">
    <source>
        <dbReference type="Araport" id="AT1G78420"/>
    </source>
</evidence>
<evidence type="ECO:0000312" key="8">
    <source>
        <dbReference type="EMBL" id="AAF71811.1"/>
    </source>
</evidence>